<organism>
    <name type="scientific">Shewanella frigidimarina (strain NCIMB 400)</name>
    <dbReference type="NCBI Taxonomy" id="318167"/>
    <lineage>
        <taxon>Bacteria</taxon>
        <taxon>Pseudomonadati</taxon>
        <taxon>Pseudomonadota</taxon>
        <taxon>Gammaproteobacteria</taxon>
        <taxon>Alteromonadales</taxon>
        <taxon>Shewanellaceae</taxon>
        <taxon>Shewanella</taxon>
    </lineage>
</organism>
<keyword id="KW-0963">Cytoplasm</keyword>
<keyword id="KW-0489">Methyltransferase</keyword>
<keyword id="KW-1185">Reference proteome</keyword>
<keyword id="KW-0949">S-adenosyl-L-methionine</keyword>
<keyword id="KW-0808">Transferase</keyword>
<dbReference type="EC" id="2.1.1.67" evidence="1"/>
<dbReference type="EMBL" id="CP000447">
    <property type="protein sequence ID" value="ABI73326.1"/>
    <property type="molecule type" value="Genomic_DNA"/>
</dbReference>
<dbReference type="RefSeq" id="WP_011638917.1">
    <property type="nucleotide sequence ID" value="NC_008345.1"/>
</dbReference>
<dbReference type="SMR" id="Q07XD8"/>
<dbReference type="STRING" id="318167.Sfri_3498"/>
<dbReference type="KEGG" id="sfr:Sfri_3498"/>
<dbReference type="eggNOG" id="COG0500">
    <property type="taxonomic scope" value="Bacteria"/>
</dbReference>
<dbReference type="HOGENOM" id="CLU_085515_1_0_6"/>
<dbReference type="OrthoDB" id="9778208at2"/>
<dbReference type="Proteomes" id="UP000000684">
    <property type="component" value="Chromosome"/>
</dbReference>
<dbReference type="GO" id="GO:0005737">
    <property type="term" value="C:cytoplasm"/>
    <property type="evidence" value="ECO:0007669"/>
    <property type="project" value="UniProtKB-SubCell"/>
</dbReference>
<dbReference type="GO" id="GO:0008119">
    <property type="term" value="F:thiopurine S-methyltransferase activity"/>
    <property type="evidence" value="ECO:0007669"/>
    <property type="project" value="UniProtKB-UniRule"/>
</dbReference>
<dbReference type="GO" id="GO:0032259">
    <property type="term" value="P:methylation"/>
    <property type="evidence" value="ECO:0007669"/>
    <property type="project" value="UniProtKB-KW"/>
</dbReference>
<dbReference type="GO" id="GO:0010038">
    <property type="term" value="P:response to metal ion"/>
    <property type="evidence" value="ECO:0007669"/>
    <property type="project" value="InterPro"/>
</dbReference>
<dbReference type="FunFam" id="3.40.50.150:FF:000101">
    <property type="entry name" value="Thiopurine S-methyltransferase"/>
    <property type="match status" value="1"/>
</dbReference>
<dbReference type="Gene3D" id="3.40.50.150">
    <property type="entry name" value="Vaccinia Virus protein VP39"/>
    <property type="match status" value="1"/>
</dbReference>
<dbReference type="HAMAP" id="MF_00812">
    <property type="entry name" value="Thiopur_methtran"/>
    <property type="match status" value="1"/>
</dbReference>
<dbReference type="InterPro" id="IPR029063">
    <property type="entry name" value="SAM-dependent_MTases_sf"/>
</dbReference>
<dbReference type="InterPro" id="IPR022474">
    <property type="entry name" value="Thiopur_S-MeTfrase_Se/Te_detox"/>
</dbReference>
<dbReference type="InterPro" id="IPR025835">
    <property type="entry name" value="Thiopurine_S-MeTrfase"/>
</dbReference>
<dbReference type="InterPro" id="IPR008854">
    <property type="entry name" value="TPMT"/>
</dbReference>
<dbReference type="NCBIfam" id="NF009732">
    <property type="entry name" value="PRK13255.1"/>
    <property type="match status" value="1"/>
</dbReference>
<dbReference type="NCBIfam" id="TIGR03840">
    <property type="entry name" value="TMPT_Se_Te"/>
    <property type="match status" value="1"/>
</dbReference>
<dbReference type="PANTHER" id="PTHR10259">
    <property type="entry name" value="THIOPURINE S-METHYLTRANSFERASE"/>
    <property type="match status" value="1"/>
</dbReference>
<dbReference type="PANTHER" id="PTHR10259:SF11">
    <property type="entry name" value="THIOPURINE S-METHYLTRANSFERASE"/>
    <property type="match status" value="1"/>
</dbReference>
<dbReference type="Pfam" id="PF05724">
    <property type="entry name" value="TPMT"/>
    <property type="match status" value="1"/>
</dbReference>
<dbReference type="PIRSF" id="PIRSF023956">
    <property type="entry name" value="Thiopurine_S-methyltransferase"/>
    <property type="match status" value="1"/>
</dbReference>
<dbReference type="SUPFAM" id="SSF53335">
    <property type="entry name" value="S-adenosyl-L-methionine-dependent methyltransferases"/>
    <property type="match status" value="1"/>
</dbReference>
<dbReference type="PROSITE" id="PS51585">
    <property type="entry name" value="SAM_MT_TPMT"/>
    <property type="match status" value="1"/>
</dbReference>
<protein>
    <recommendedName>
        <fullName evidence="1">Thiopurine S-methyltransferase</fullName>
        <ecNumber evidence="1">2.1.1.67</ecNumber>
    </recommendedName>
    <alternativeName>
        <fullName evidence="1">Thiopurine methyltransferase</fullName>
    </alternativeName>
</protein>
<sequence>MEPSFWHEKWQLQQIGFHQNQVNPFLVKYWSHIGLNENTEVFVPLCGKSLDMFYLAEQRHTVLGCELNTLAVEQFFTDNGLTYQVNHTDEHVVFSTDQVTLYQGDIFTLPKSATASISGFYDRAALIAWPEEMRQQYVKALAALIPANVSGLLITLDYLQETLKGPPFAVSPRWVESYLTPYFDVELLECVDVLADNPRFMNKHVPWLNEAVYKLTRKS</sequence>
<comment type="catalytic activity">
    <reaction evidence="1">
        <text>S-adenosyl-L-methionine + a thiopurine = S-adenosyl-L-homocysteine + a thiopurine S-methylether.</text>
        <dbReference type="EC" id="2.1.1.67"/>
    </reaction>
</comment>
<comment type="subcellular location">
    <subcellularLocation>
        <location evidence="1">Cytoplasm</location>
    </subcellularLocation>
</comment>
<comment type="similarity">
    <text evidence="1">Belongs to the class I-like SAM-binding methyltransferase superfamily. TPMT family.</text>
</comment>
<accession>Q07XD8</accession>
<feature type="chain" id="PRO_1000047220" description="Thiopurine S-methyltransferase">
    <location>
        <begin position="1"/>
        <end position="219"/>
    </location>
</feature>
<feature type="binding site" evidence="1">
    <location>
        <position position="10"/>
    </location>
    <ligand>
        <name>S-adenosyl-L-methionine</name>
        <dbReference type="ChEBI" id="CHEBI:59789"/>
    </ligand>
</feature>
<feature type="binding site" evidence="1">
    <location>
        <position position="45"/>
    </location>
    <ligand>
        <name>S-adenosyl-L-methionine</name>
        <dbReference type="ChEBI" id="CHEBI:59789"/>
    </ligand>
</feature>
<feature type="binding site" evidence="1">
    <location>
        <position position="66"/>
    </location>
    <ligand>
        <name>S-adenosyl-L-methionine</name>
        <dbReference type="ChEBI" id="CHEBI:59789"/>
    </ligand>
</feature>
<feature type="binding site" evidence="1">
    <location>
        <position position="123"/>
    </location>
    <ligand>
        <name>S-adenosyl-L-methionine</name>
        <dbReference type="ChEBI" id="CHEBI:59789"/>
    </ligand>
</feature>
<evidence type="ECO:0000255" key="1">
    <source>
        <dbReference type="HAMAP-Rule" id="MF_00812"/>
    </source>
</evidence>
<reference key="1">
    <citation type="submission" date="2006-08" db="EMBL/GenBank/DDBJ databases">
        <title>Complete sequence of Shewanella frigidimarina NCIMB 400.</title>
        <authorList>
            <consortium name="US DOE Joint Genome Institute"/>
            <person name="Copeland A."/>
            <person name="Lucas S."/>
            <person name="Lapidus A."/>
            <person name="Barry K."/>
            <person name="Detter J.C."/>
            <person name="Glavina del Rio T."/>
            <person name="Hammon N."/>
            <person name="Israni S."/>
            <person name="Dalin E."/>
            <person name="Tice H."/>
            <person name="Pitluck S."/>
            <person name="Fredrickson J.K."/>
            <person name="Kolker E."/>
            <person name="McCuel L.A."/>
            <person name="DiChristina T."/>
            <person name="Nealson K.H."/>
            <person name="Newman D."/>
            <person name="Tiedje J.M."/>
            <person name="Zhou J."/>
            <person name="Romine M.F."/>
            <person name="Culley D.E."/>
            <person name="Serres M."/>
            <person name="Chertkov O."/>
            <person name="Brettin T."/>
            <person name="Bruce D."/>
            <person name="Han C."/>
            <person name="Tapia R."/>
            <person name="Gilna P."/>
            <person name="Schmutz J."/>
            <person name="Larimer F."/>
            <person name="Land M."/>
            <person name="Hauser L."/>
            <person name="Kyrpides N."/>
            <person name="Mikhailova N."/>
            <person name="Richardson P."/>
        </authorList>
    </citation>
    <scope>NUCLEOTIDE SEQUENCE [LARGE SCALE GENOMIC DNA]</scope>
    <source>
        <strain>NCIMB 400</strain>
    </source>
</reference>
<gene>
    <name evidence="1" type="primary">tpm</name>
    <name type="ordered locus">Sfri_3498</name>
</gene>
<name>TPMT_SHEFN</name>
<proteinExistence type="inferred from homology"/>